<reference key="1">
    <citation type="online journal article" date="1995" name="Plant Gene Register">
        <title>Isolation of a calnexin homolog from developing soybean seeds.</title>
        <authorList>
            <person name="Goode J.H."/>
            <person name="Settlage S.B."/>
            <person name="Wilson R.F."/>
            <person name="Dewey R.E."/>
        </authorList>
        <locator>PGR95-005</locator>
    </citation>
    <scope>NUCLEOTIDE SEQUENCE [MRNA]</scope>
    <source>
        <strain>cv. Roanoke</strain>
        <tissue>Seed</tissue>
    </source>
</reference>
<feature type="signal peptide" evidence="3">
    <location>
        <begin position="1"/>
        <end position="25"/>
    </location>
</feature>
<feature type="chain" id="PRO_0000004206" description="Calnexin homolog">
    <location>
        <begin position="26"/>
        <end position="546"/>
    </location>
</feature>
<feature type="topological domain" description="Lumenal" evidence="3">
    <location>
        <begin position="26"/>
        <end position="475"/>
    </location>
</feature>
<feature type="transmembrane region" description="Helical" evidence="3">
    <location>
        <begin position="476"/>
        <end position="496"/>
    </location>
</feature>
<feature type="topological domain" description="Cytoplasmic" evidence="3">
    <location>
        <begin position="497"/>
        <end position="546"/>
    </location>
</feature>
<feature type="repeat" description="1-1">
    <location>
        <begin position="234"/>
        <end position="245"/>
    </location>
</feature>
<feature type="repeat" description="1-2">
    <location>
        <begin position="251"/>
        <end position="262"/>
    </location>
</feature>
<feature type="repeat" description="1-3">
    <location>
        <begin position="270"/>
        <end position="281"/>
    </location>
</feature>
<feature type="repeat" description="1-4">
    <location>
        <begin position="289"/>
        <end position="300"/>
    </location>
</feature>
<feature type="repeat" description="2-1">
    <location>
        <begin position="304"/>
        <end position="314"/>
    </location>
</feature>
<feature type="repeat" description="2-2">
    <location>
        <begin position="323"/>
        <end position="333"/>
    </location>
</feature>
<feature type="repeat" description="2-3">
    <location>
        <begin position="337"/>
        <end position="347"/>
    </location>
</feature>
<feature type="repeat" description="2-4">
    <location>
        <begin position="351"/>
        <end position="361"/>
    </location>
</feature>
<feature type="region of interest" description="Disordered" evidence="4">
    <location>
        <begin position="217"/>
        <end position="329"/>
    </location>
</feature>
<feature type="region of interest" description="P domain (Extended arm)" evidence="1">
    <location>
        <begin position="232"/>
        <end position="365"/>
    </location>
</feature>
<feature type="region of interest" description="4 X approximate repeats">
    <location>
        <begin position="234"/>
        <end position="300"/>
    </location>
</feature>
<feature type="region of interest" description="4 X approximate repeats">
    <location>
        <begin position="304"/>
        <end position="361"/>
    </location>
</feature>
<feature type="region of interest" description="Disordered" evidence="4">
    <location>
        <begin position="501"/>
        <end position="546"/>
    </location>
</feature>
<feature type="compositionally biased region" description="Basic and acidic residues" evidence="4">
    <location>
        <begin position="233"/>
        <end position="249"/>
    </location>
</feature>
<feature type="compositionally biased region" description="Acidic residues" evidence="4">
    <location>
        <begin position="259"/>
        <end position="290"/>
    </location>
</feature>
<feature type="compositionally biased region" description="Acidic residues" evidence="4">
    <location>
        <begin position="297"/>
        <end position="306"/>
    </location>
</feature>
<feature type="compositionally biased region" description="Basic and acidic residues" evidence="4">
    <location>
        <begin position="501"/>
        <end position="511"/>
    </location>
</feature>
<feature type="compositionally biased region" description="Basic and acidic residues" evidence="4">
    <location>
        <begin position="522"/>
        <end position="534"/>
    </location>
</feature>
<feature type="binding site" evidence="1">
    <location>
        <position position="43"/>
    </location>
    <ligand>
        <name>Ca(2+)</name>
        <dbReference type="ChEBI" id="CHEBI:29108"/>
    </ligand>
</feature>
<feature type="binding site" evidence="1">
    <location>
        <position position="74"/>
    </location>
    <ligand>
        <name>Ca(2+)</name>
        <dbReference type="ChEBI" id="CHEBI:29108"/>
    </ligand>
</feature>
<feature type="binding site" evidence="2">
    <location>
        <position position="121"/>
    </location>
    <ligand>
        <name>an alpha-D-glucoside</name>
        <dbReference type="ChEBI" id="CHEBI:22390"/>
    </ligand>
</feature>
<feature type="binding site" evidence="2">
    <location>
        <position position="123"/>
    </location>
    <ligand>
        <name>an alpha-D-glucoside</name>
        <dbReference type="ChEBI" id="CHEBI:22390"/>
    </ligand>
</feature>
<feature type="binding site" evidence="2">
    <location>
        <position position="143"/>
    </location>
    <ligand>
        <name>an alpha-D-glucoside</name>
        <dbReference type="ChEBI" id="CHEBI:22390"/>
    </ligand>
</feature>
<feature type="binding site" evidence="2">
    <location>
        <position position="150"/>
    </location>
    <ligand>
        <name>an alpha-D-glucoside</name>
        <dbReference type="ChEBI" id="CHEBI:22390"/>
    </ligand>
</feature>
<feature type="binding site" evidence="2">
    <location>
        <position position="380"/>
    </location>
    <ligand>
        <name>an alpha-D-glucoside</name>
        <dbReference type="ChEBI" id="CHEBI:22390"/>
    </ligand>
</feature>
<feature type="binding site" evidence="1">
    <location>
        <position position="391"/>
    </location>
    <ligand>
        <name>Ca(2+)</name>
        <dbReference type="ChEBI" id="CHEBI:29108"/>
    </ligand>
</feature>
<feature type="glycosylation site" description="N-linked (GlcNAc...) asparagine" evidence="3">
    <location>
        <position position="473"/>
    </location>
</feature>
<feature type="disulfide bond" evidence="1">
    <location>
        <begin position="117"/>
        <end position="152"/>
    </location>
</feature>
<feature type="disulfide bond" evidence="1">
    <location>
        <begin position="316"/>
        <end position="322"/>
    </location>
</feature>
<dbReference type="EMBL" id="U20502">
    <property type="protein sequence ID" value="AAA80588.1"/>
    <property type="molecule type" value="mRNA"/>
</dbReference>
<dbReference type="PIR" id="T06415">
    <property type="entry name" value="T06415"/>
</dbReference>
<dbReference type="RefSeq" id="NP_001235116.1">
    <property type="nucleotide sequence ID" value="NM_001248187.2"/>
</dbReference>
<dbReference type="SMR" id="Q39817"/>
<dbReference type="FunCoup" id="Q39817">
    <property type="interactions" value="5050"/>
</dbReference>
<dbReference type="STRING" id="3847.Q39817"/>
<dbReference type="PaxDb" id="3847-GLYMA06G17060.1"/>
<dbReference type="EnsemblPlants" id="KRH54057">
    <property type="protein sequence ID" value="KRH54057"/>
    <property type="gene ID" value="GLYMA_06G162600"/>
</dbReference>
<dbReference type="GeneID" id="547851"/>
<dbReference type="Gramene" id="KRH54057">
    <property type="protein sequence ID" value="KRH54057"/>
    <property type="gene ID" value="GLYMA_06G162600"/>
</dbReference>
<dbReference type="KEGG" id="gmx:547851"/>
<dbReference type="eggNOG" id="KOG0675">
    <property type="taxonomic scope" value="Eukaryota"/>
</dbReference>
<dbReference type="InParanoid" id="Q39817"/>
<dbReference type="OrthoDB" id="1938156at2759"/>
<dbReference type="Proteomes" id="UP000008827">
    <property type="component" value="Chromosome 6"/>
</dbReference>
<dbReference type="GO" id="GO:0005789">
    <property type="term" value="C:endoplasmic reticulum membrane"/>
    <property type="evidence" value="ECO:0000318"/>
    <property type="project" value="GO_Central"/>
</dbReference>
<dbReference type="GO" id="GO:0005509">
    <property type="term" value="F:calcium ion binding"/>
    <property type="evidence" value="ECO:0000318"/>
    <property type="project" value="GO_Central"/>
</dbReference>
<dbReference type="GO" id="GO:0030246">
    <property type="term" value="F:carbohydrate binding"/>
    <property type="evidence" value="ECO:0007669"/>
    <property type="project" value="UniProtKB-KW"/>
</dbReference>
<dbReference type="GO" id="GO:0051082">
    <property type="term" value="F:unfolded protein binding"/>
    <property type="evidence" value="ECO:0007669"/>
    <property type="project" value="InterPro"/>
</dbReference>
<dbReference type="GO" id="GO:0036503">
    <property type="term" value="P:ERAD pathway"/>
    <property type="evidence" value="ECO:0000318"/>
    <property type="project" value="GO_Central"/>
</dbReference>
<dbReference type="GO" id="GO:0006457">
    <property type="term" value="P:protein folding"/>
    <property type="evidence" value="ECO:0000318"/>
    <property type="project" value="GO_Central"/>
</dbReference>
<dbReference type="FunFam" id="2.10.250.10:FF:000001">
    <property type="entry name" value="Calnexin homolog"/>
    <property type="match status" value="1"/>
</dbReference>
<dbReference type="FunFam" id="2.60.120.200:FF:000048">
    <property type="entry name" value="Calnexin homolog"/>
    <property type="match status" value="1"/>
</dbReference>
<dbReference type="Gene3D" id="2.60.120.200">
    <property type="match status" value="1"/>
</dbReference>
<dbReference type="Gene3D" id="2.10.250.10">
    <property type="entry name" value="Calreticulin/calnexin, P domain"/>
    <property type="match status" value="1"/>
</dbReference>
<dbReference type="InterPro" id="IPR001580">
    <property type="entry name" value="Calret/calnex"/>
</dbReference>
<dbReference type="InterPro" id="IPR018124">
    <property type="entry name" value="Calret/calnex_CS"/>
</dbReference>
<dbReference type="InterPro" id="IPR009033">
    <property type="entry name" value="Calreticulin/calnexin_P_dom_sf"/>
</dbReference>
<dbReference type="InterPro" id="IPR013320">
    <property type="entry name" value="ConA-like_dom_sf"/>
</dbReference>
<dbReference type="PANTHER" id="PTHR11073:SF59">
    <property type="entry name" value="CALNEXIN HOMOLOG"/>
    <property type="match status" value="1"/>
</dbReference>
<dbReference type="PANTHER" id="PTHR11073">
    <property type="entry name" value="CALRETICULIN AND CALNEXIN"/>
    <property type="match status" value="1"/>
</dbReference>
<dbReference type="Pfam" id="PF00262">
    <property type="entry name" value="Calreticulin"/>
    <property type="match status" value="1"/>
</dbReference>
<dbReference type="PRINTS" id="PR00626">
    <property type="entry name" value="CALRETICULIN"/>
</dbReference>
<dbReference type="SUPFAM" id="SSF49899">
    <property type="entry name" value="Concanavalin A-like lectins/glucanases"/>
    <property type="match status" value="1"/>
</dbReference>
<dbReference type="SUPFAM" id="SSF63887">
    <property type="entry name" value="P-domain of calnexin/calreticulin"/>
    <property type="match status" value="1"/>
</dbReference>
<dbReference type="PROSITE" id="PS00803">
    <property type="entry name" value="CALRETICULIN_1"/>
    <property type="match status" value="1"/>
</dbReference>
<dbReference type="PROSITE" id="PS00804">
    <property type="entry name" value="CALRETICULIN_2"/>
    <property type="match status" value="1"/>
</dbReference>
<dbReference type="PROSITE" id="PS00805">
    <property type="entry name" value="CALRETICULIN_REPEAT"/>
    <property type="match status" value="3"/>
</dbReference>
<comment type="function">
    <text evidence="1">Calcium-binding protein that interacts with newly synthesized monoglucosylated glycoproteins in the endoplasmic reticulum. It may act in assisting protein assembly and/or in the retention within the ER of unassembled protein subunits. It seems to play a major role in the quality control apparatus of the ER by the retention of incorrectly folded proteins (By similarity).</text>
</comment>
<comment type="subcellular location">
    <subcellularLocation>
        <location evidence="1">Endoplasmic reticulum membrane</location>
        <topology evidence="1">Single-pass type I membrane protein</topology>
    </subcellularLocation>
</comment>
<comment type="similarity">
    <text evidence="5">Belongs to the calreticulin family.</text>
</comment>
<name>CALX_SOYBN</name>
<protein>
    <recommendedName>
        <fullName>Calnexin homolog</fullName>
    </recommendedName>
</protein>
<accession>Q39817</accession>
<proteinExistence type="evidence at transcript level"/>
<sequence length="546" mass="62081">MGERKGIPMALGLLAMILFFIASSSSHLVRASDDADDAIFYESFDEDFDGRWIVSDKEDYNGVWKHAKSDGHDDYGLLVSEQARKYAIVKELAESVSLKDGTVVLQFETRLQNGLECGGAYIKYLRPQESGWKPKEFDNESPYSIMFGPDKCGATNKVHFIFKHKNPKSGEYVEHHLKYPPSVPSDKLTHVYTAILKPDNELQILIDGEEKKKANFLSSEDFEPPLIPSKTIPDPDDKKPEDWDERAKIPDPSAVKPDDWDEDAPMEILDEEAEKPEGWLDDEPEEIDDPEATKPEDWDDEEDGEWEAPKIENPKCEAAPGCGEWKRPTKRNPAYKGKWSAPYIDNPSYKGIWKPREIPNPEYFELAKPDFEPIAAIGIEIWTMQDGILFDNVLIANDDKVAESYRETTWKPKFTVEKDKLKAEEEAATGSDGISGFQKKVFDLLYKIADIPFLSEHKSKIFDLIEKAEKQPNLTIGILVAVVVVFVSIFFRLIFGGKKPAKVEKKPERTEASNNQGSGENEENKEKEKQKEEASNAARRRPRRET</sequence>
<evidence type="ECO:0000250" key="1"/>
<evidence type="ECO:0000250" key="2">
    <source>
        <dbReference type="UniProtKB" id="P14211"/>
    </source>
</evidence>
<evidence type="ECO:0000255" key="3"/>
<evidence type="ECO:0000256" key="4">
    <source>
        <dbReference type="SAM" id="MobiDB-lite"/>
    </source>
</evidence>
<evidence type="ECO:0000305" key="5"/>
<keyword id="KW-0106">Calcium</keyword>
<keyword id="KW-0143">Chaperone</keyword>
<keyword id="KW-1015">Disulfide bond</keyword>
<keyword id="KW-0256">Endoplasmic reticulum</keyword>
<keyword id="KW-0325">Glycoprotein</keyword>
<keyword id="KW-0430">Lectin</keyword>
<keyword id="KW-0472">Membrane</keyword>
<keyword id="KW-0479">Metal-binding</keyword>
<keyword id="KW-1185">Reference proteome</keyword>
<keyword id="KW-0677">Repeat</keyword>
<keyword id="KW-0732">Signal</keyword>
<keyword id="KW-0812">Transmembrane</keyword>
<keyword id="KW-1133">Transmembrane helix</keyword>
<organism>
    <name type="scientific">Glycine max</name>
    <name type="common">Soybean</name>
    <name type="synonym">Glycine hispida</name>
    <dbReference type="NCBI Taxonomy" id="3847"/>
    <lineage>
        <taxon>Eukaryota</taxon>
        <taxon>Viridiplantae</taxon>
        <taxon>Streptophyta</taxon>
        <taxon>Embryophyta</taxon>
        <taxon>Tracheophyta</taxon>
        <taxon>Spermatophyta</taxon>
        <taxon>Magnoliopsida</taxon>
        <taxon>eudicotyledons</taxon>
        <taxon>Gunneridae</taxon>
        <taxon>Pentapetalae</taxon>
        <taxon>rosids</taxon>
        <taxon>fabids</taxon>
        <taxon>Fabales</taxon>
        <taxon>Fabaceae</taxon>
        <taxon>Papilionoideae</taxon>
        <taxon>50 kb inversion clade</taxon>
        <taxon>NPAAA clade</taxon>
        <taxon>indigoferoid/millettioid clade</taxon>
        <taxon>Phaseoleae</taxon>
        <taxon>Glycine</taxon>
        <taxon>Glycine subgen. Soja</taxon>
    </lineage>
</organism>